<gene>
    <name evidence="1" type="primary">queA</name>
    <name type="ordered locus">Jann_1717</name>
</gene>
<dbReference type="EC" id="2.4.99.17" evidence="1"/>
<dbReference type="EMBL" id="CP000264">
    <property type="protein sequence ID" value="ABD54634.1"/>
    <property type="molecule type" value="Genomic_DNA"/>
</dbReference>
<dbReference type="RefSeq" id="WP_011454839.1">
    <property type="nucleotide sequence ID" value="NC_007802.1"/>
</dbReference>
<dbReference type="SMR" id="Q28RM8"/>
<dbReference type="STRING" id="290400.Jann_1717"/>
<dbReference type="KEGG" id="jan:Jann_1717"/>
<dbReference type="eggNOG" id="COG0809">
    <property type="taxonomic scope" value="Bacteria"/>
</dbReference>
<dbReference type="HOGENOM" id="CLU_039110_1_1_5"/>
<dbReference type="OrthoDB" id="9805933at2"/>
<dbReference type="UniPathway" id="UPA00392"/>
<dbReference type="Proteomes" id="UP000008326">
    <property type="component" value="Chromosome"/>
</dbReference>
<dbReference type="GO" id="GO:0005737">
    <property type="term" value="C:cytoplasm"/>
    <property type="evidence" value="ECO:0007669"/>
    <property type="project" value="UniProtKB-SubCell"/>
</dbReference>
<dbReference type="GO" id="GO:0051075">
    <property type="term" value="F:S-adenosylmethionine:tRNA ribosyltransferase-isomerase activity"/>
    <property type="evidence" value="ECO:0007669"/>
    <property type="project" value="UniProtKB-EC"/>
</dbReference>
<dbReference type="GO" id="GO:0008616">
    <property type="term" value="P:queuosine biosynthetic process"/>
    <property type="evidence" value="ECO:0007669"/>
    <property type="project" value="UniProtKB-UniRule"/>
</dbReference>
<dbReference type="GO" id="GO:0002099">
    <property type="term" value="P:tRNA wobble guanine modification"/>
    <property type="evidence" value="ECO:0007669"/>
    <property type="project" value="TreeGrafter"/>
</dbReference>
<dbReference type="FunFam" id="3.40.1780.10:FF:000001">
    <property type="entry name" value="S-adenosylmethionine:tRNA ribosyltransferase-isomerase"/>
    <property type="match status" value="1"/>
</dbReference>
<dbReference type="Gene3D" id="2.40.10.240">
    <property type="entry name" value="QueA-like"/>
    <property type="match status" value="1"/>
</dbReference>
<dbReference type="Gene3D" id="3.40.1780.10">
    <property type="entry name" value="QueA-like"/>
    <property type="match status" value="1"/>
</dbReference>
<dbReference type="HAMAP" id="MF_00113">
    <property type="entry name" value="QueA"/>
    <property type="match status" value="1"/>
</dbReference>
<dbReference type="InterPro" id="IPR003699">
    <property type="entry name" value="QueA"/>
</dbReference>
<dbReference type="InterPro" id="IPR042118">
    <property type="entry name" value="QueA_dom1"/>
</dbReference>
<dbReference type="InterPro" id="IPR042119">
    <property type="entry name" value="QueA_dom2"/>
</dbReference>
<dbReference type="InterPro" id="IPR036100">
    <property type="entry name" value="QueA_sf"/>
</dbReference>
<dbReference type="NCBIfam" id="NF001140">
    <property type="entry name" value="PRK00147.1"/>
    <property type="match status" value="1"/>
</dbReference>
<dbReference type="NCBIfam" id="TIGR00113">
    <property type="entry name" value="queA"/>
    <property type="match status" value="1"/>
</dbReference>
<dbReference type="PANTHER" id="PTHR30307">
    <property type="entry name" value="S-ADENOSYLMETHIONINE:TRNA RIBOSYLTRANSFERASE-ISOMERASE"/>
    <property type="match status" value="1"/>
</dbReference>
<dbReference type="PANTHER" id="PTHR30307:SF0">
    <property type="entry name" value="S-ADENOSYLMETHIONINE:TRNA RIBOSYLTRANSFERASE-ISOMERASE"/>
    <property type="match status" value="1"/>
</dbReference>
<dbReference type="Pfam" id="PF02547">
    <property type="entry name" value="Queuosine_synth"/>
    <property type="match status" value="1"/>
</dbReference>
<dbReference type="SUPFAM" id="SSF111337">
    <property type="entry name" value="QueA-like"/>
    <property type="match status" value="1"/>
</dbReference>
<reference key="1">
    <citation type="submission" date="2006-02" db="EMBL/GenBank/DDBJ databases">
        <title>Complete sequence of chromosome of Jannaschia sp. CCS1.</title>
        <authorList>
            <consortium name="US DOE Joint Genome Institute"/>
            <person name="Copeland A."/>
            <person name="Lucas S."/>
            <person name="Lapidus A."/>
            <person name="Barry K."/>
            <person name="Detter J.C."/>
            <person name="Glavina del Rio T."/>
            <person name="Hammon N."/>
            <person name="Israni S."/>
            <person name="Pitluck S."/>
            <person name="Brettin T."/>
            <person name="Bruce D."/>
            <person name="Han C."/>
            <person name="Tapia R."/>
            <person name="Gilna P."/>
            <person name="Chertkov O."/>
            <person name="Saunders E."/>
            <person name="Schmutz J."/>
            <person name="Larimer F."/>
            <person name="Land M."/>
            <person name="Kyrpides N."/>
            <person name="Lykidis A."/>
            <person name="Moran M.A."/>
            <person name="Belas R."/>
            <person name="Ye W."/>
            <person name="Buchan A."/>
            <person name="Gonzalez J.M."/>
            <person name="Schell M.A."/>
            <person name="Richardson P."/>
        </authorList>
    </citation>
    <scope>NUCLEOTIDE SEQUENCE [LARGE SCALE GENOMIC DNA]</scope>
    <source>
        <strain>CCS1</strain>
    </source>
</reference>
<keyword id="KW-0963">Cytoplasm</keyword>
<keyword id="KW-0671">Queuosine biosynthesis</keyword>
<keyword id="KW-1185">Reference proteome</keyword>
<keyword id="KW-0949">S-adenosyl-L-methionine</keyword>
<keyword id="KW-0808">Transferase</keyword>
<comment type="function">
    <text evidence="1">Transfers and isomerizes the ribose moiety from AdoMet to the 7-aminomethyl group of 7-deazaguanine (preQ1-tRNA) to give epoxyqueuosine (oQ-tRNA).</text>
</comment>
<comment type="catalytic activity">
    <reaction evidence="1">
        <text>7-aminomethyl-7-carbaguanosine(34) in tRNA + S-adenosyl-L-methionine = epoxyqueuosine(34) in tRNA + adenine + L-methionine + 2 H(+)</text>
        <dbReference type="Rhea" id="RHEA:32155"/>
        <dbReference type="Rhea" id="RHEA-COMP:10342"/>
        <dbReference type="Rhea" id="RHEA-COMP:18582"/>
        <dbReference type="ChEBI" id="CHEBI:15378"/>
        <dbReference type="ChEBI" id="CHEBI:16708"/>
        <dbReference type="ChEBI" id="CHEBI:57844"/>
        <dbReference type="ChEBI" id="CHEBI:59789"/>
        <dbReference type="ChEBI" id="CHEBI:82833"/>
        <dbReference type="ChEBI" id="CHEBI:194443"/>
        <dbReference type="EC" id="2.4.99.17"/>
    </reaction>
</comment>
<comment type="pathway">
    <text evidence="1">tRNA modification; tRNA-queuosine biosynthesis.</text>
</comment>
<comment type="subunit">
    <text evidence="1">Monomer.</text>
</comment>
<comment type="subcellular location">
    <subcellularLocation>
        <location evidence="1">Cytoplasm</location>
    </subcellularLocation>
</comment>
<comment type="similarity">
    <text evidence="1">Belongs to the QueA family.</text>
</comment>
<sequence>MKLDDFDFDLPDGLIATRPARPRSSARLLVADGPETHDLTVADLPSMLRRGDRLVLNDTRVIPARLTGTRTRMSAQGEVTARIEVTLMEPQADGTWSALAKPMRKLKAGEKIIFSNALQADVHAMDEGLRLAFNVEGDDFDAALNAAGAMPLPPYIAGKRAPDARDYHDYQTIWAKRAGAVAAPTASLHFDEHLMDALTSRGVDVTFVTLHVGAGTFLPVTVDDVTTHKMHAEWGEVRATAAAEINATKAAGGRIIPVGTTALRLIESAAQDGTIHPFEGTTDIFIYPGYRWQITDALMTNFHLPKSTLLMLVSALMGKDRMDAVYAHAIANQYRFFSYGDASLLFPSQKGQTSR</sequence>
<evidence type="ECO:0000255" key="1">
    <source>
        <dbReference type="HAMAP-Rule" id="MF_00113"/>
    </source>
</evidence>
<proteinExistence type="inferred from homology"/>
<name>QUEA_JANSC</name>
<protein>
    <recommendedName>
        <fullName evidence="1">S-adenosylmethionine:tRNA ribosyltransferase-isomerase</fullName>
        <ecNumber evidence="1">2.4.99.17</ecNumber>
    </recommendedName>
    <alternativeName>
        <fullName evidence="1">Queuosine biosynthesis protein QueA</fullName>
    </alternativeName>
</protein>
<organism>
    <name type="scientific">Jannaschia sp. (strain CCS1)</name>
    <dbReference type="NCBI Taxonomy" id="290400"/>
    <lineage>
        <taxon>Bacteria</taxon>
        <taxon>Pseudomonadati</taxon>
        <taxon>Pseudomonadota</taxon>
        <taxon>Alphaproteobacteria</taxon>
        <taxon>Rhodobacterales</taxon>
        <taxon>Roseobacteraceae</taxon>
        <taxon>Jannaschia</taxon>
    </lineage>
</organism>
<accession>Q28RM8</accession>
<feature type="chain" id="PRO_1000015227" description="S-adenosylmethionine:tRNA ribosyltransferase-isomerase">
    <location>
        <begin position="1"/>
        <end position="355"/>
    </location>
</feature>